<reference key="1">
    <citation type="journal article" date="2002" name="Proc. Natl. Acad. Sci. U.S.A.">
        <title>Extensive mosaic structure revealed by the complete genome sequence of uropathogenic Escherichia coli.</title>
        <authorList>
            <person name="Welch R.A."/>
            <person name="Burland V."/>
            <person name="Plunkett G. III"/>
            <person name="Redford P."/>
            <person name="Roesch P."/>
            <person name="Rasko D."/>
            <person name="Buckles E.L."/>
            <person name="Liou S.-R."/>
            <person name="Boutin A."/>
            <person name="Hackett J."/>
            <person name="Stroud D."/>
            <person name="Mayhew G.F."/>
            <person name="Rose D.J."/>
            <person name="Zhou S."/>
            <person name="Schwartz D.C."/>
            <person name="Perna N.T."/>
            <person name="Mobley H.L.T."/>
            <person name="Donnenberg M.S."/>
            <person name="Blattner F.R."/>
        </authorList>
    </citation>
    <scope>NUCLEOTIDE SEQUENCE [LARGE SCALE GENOMIC DNA]</scope>
    <source>
        <strain>CFT073 / ATCC 700928 / UPEC</strain>
    </source>
</reference>
<protein>
    <recommendedName>
        <fullName evidence="2">Tryptophan synthase beta chain</fullName>
        <ecNumber evidence="2">4.2.1.20</ecNumber>
    </recommendedName>
</protein>
<comment type="function">
    <text evidence="2">The beta subunit is responsible for the synthesis of L-tryptophan from indole and L-serine.</text>
</comment>
<comment type="catalytic activity">
    <reaction evidence="2">
        <text>(1S,2R)-1-C-(indol-3-yl)glycerol 3-phosphate + L-serine = D-glyceraldehyde 3-phosphate + L-tryptophan + H2O</text>
        <dbReference type="Rhea" id="RHEA:10532"/>
        <dbReference type="ChEBI" id="CHEBI:15377"/>
        <dbReference type="ChEBI" id="CHEBI:33384"/>
        <dbReference type="ChEBI" id="CHEBI:57912"/>
        <dbReference type="ChEBI" id="CHEBI:58866"/>
        <dbReference type="ChEBI" id="CHEBI:59776"/>
        <dbReference type="EC" id="4.2.1.20"/>
    </reaction>
</comment>
<comment type="cofactor">
    <cofactor evidence="2">
        <name>pyridoxal 5'-phosphate</name>
        <dbReference type="ChEBI" id="CHEBI:597326"/>
    </cofactor>
</comment>
<comment type="pathway">
    <text evidence="2">Amino-acid biosynthesis; L-tryptophan biosynthesis; L-tryptophan from chorismate: step 5/5.</text>
</comment>
<comment type="subunit">
    <text evidence="2">Tetramer of two alpha and two beta chains.</text>
</comment>
<comment type="similarity">
    <text evidence="2">Belongs to the TrpB family.</text>
</comment>
<dbReference type="EC" id="4.2.1.20" evidence="2"/>
<dbReference type="EMBL" id="AE014075">
    <property type="protein sequence ID" value="AAN80193.1"/>
    <property type="molecule type" value="Genomic_DNA"/>
</dbReference>
<dbReference type="RefSeq" id="WP_000209513.1">
    <property type="nucleotide sequence ID" value="NZ_CP051263.1"/>
</dbReference>
<dbReference type="SMR" id="Q8FHV9"/>
<dbReference type="STRING" id="199310.c1726"/>
<dbReference type="GeneID" id="75171375"/>
<dbReference type="KEGG" id="ecc:c1726"/>
<dbReference type="eggNOG" id="COG0133">
    <property type="taxonomic scope" value="Bacteria"/>
</dbReference>
<dbReference type="HOGENOM" id="CLU_016734_3_1_6"/>
<dbReference type="BioCyc" id="ECOL199310:C1726-MONOMER"/>
<dbReference type="UniPathway" id="UPA00035">
    <property type="reaction ID" value="UER00044"/>
</dbReference>
<dbReference type="Proteomes" id="UP000001410">
    <property type="component" value="Chromosome"/>
</dbReference>
<dbReference type="GO" id="GO:0005737">
    <property type="term" value="C:cytoplasm"/>
    <property type="evidence" value="ECO:0007669"/>
    <property type="project" value="TreeGrafter"/>
</dbReference>
<dbReference type="GO" id="GO:0004834">
    <property type="term" value="F:tryptophan synthase activity"/>
    <property type="evidence" value="ECO:0007669"/>
    <property type="project" value="UniProtKB-UniRule"/>
</dbReference>
<dbReference type="CDD" id="cd06446">
    <property type="entry name" value="Trp-synth_B"/>
    <property type="match status" value="1"/>
</dbReference>
<dbReference type="FunFam" id="3.40.50.1100:FF:000001">
    <property type="entry name" value="Tryptophan synthase beta chain"/>
    <property type="match status" value="1"/>
</dbReference>
<dbReference type="FunFam" id="3.40.50.1100:FF:000004">
    <property type="entry name" value="Tryptophan synthase beta chain"/>
    <property type="match status" value="1"/>
</dbReference>
<dbReference type="Gene3D" id="3.40.50.1100">
    <property type="match status" value="2"/>
</dbReference>
<dbReference type="HAMAP" id="MF_00133">
    <property type="entry name" value="Trp_synth_beta"/>
    <property type="match status" value="1"/>
</dbReference>
<dbReference type="InterPro" id="IPR006653">
    <property type="entry name" value="Trp_synth_b_CS"/>
</dbReference>
<dbReference type="InterPro" id="IPR006654">
    <property type="entry name" value="Trp_synth_beta"/>
</dbReference>
<dbReference type="InterPro" id="IPR023026">
    <property type="entry name" value="Trp_synth_beta/beta-like"/>
</dbReference>
<dbReference type="InterPro" id="IPR001926">
    <property type="entry name" value="TrpB-like_PALP"/>
</dbReference>
<dbReference type="InterPro" id="IPR036052">
    <property type="entry name" value="TrpB-like_PALP_sf"/>
</dbReference>
<dbReference type="NCBIfam" id="TIGR00263">
    <property type="entry name" value="trpB"/>
    <property type="match status" value="1"/>
</dbReference>
<dbReference type="PANTHER" id="PTHR48077:SF3">
    <property type="entry name" value="TRYPTOPHAN SYNTHASE"/>
    <property type="match status" value="1"/>
</dbReference>
<dbReference type="PANTHER" id="PTHR48077">
    <property type="entry name" value="TRYPTOPHAN SYNTHASE-RELATED"/>
    <property type="match status" value="1"/>
</dbReference>
<dbReference type="Pfam" id="PF00291">
    <property type="entry name" value="PALP"/>
    <property type="match status" value="1"/>
</dbReference>
<dbReference type="PIRSF" id="PIRSF001413">
    <property type="entry name" value="Trp_syn_beta"/>
    <property type="match status" value="1"/>
</dbReference>
<dbReference type="SUPFAM" id="SSF53686">
    <property type="entry name" value="Tryptophan synthase beta subunit-like PLP-dependent enzymes"/>
    <property type="match status" value="1"/>
</dbReference>
<dbReference type="PROSITE" id="PS00168">
    <property type="entry name" value="TRP_SYNTHASE_BETA"/>
    <property type="match status" value="1"/>
</dbReference>
<gene>
    <name evidence="2" type="primary">trpB</name>
    <name type="ordered locus">c1726</name>
</gene>
<sequence length="397" mass="42998">MTTLLNPYFGEFGGMYVPQILMPALRQLEEAFVSAQKDPEFQAQFNDLLKNYAGRPTALTKCQNITAGTNTTLYLKREDLLHGGAHKTNQVLGQALLAKRMGKTEIIAETGAGQHGVASALASALLGLKCRIYMGAKDVERQSPNVFRMRLMGAEVIPVHSGSATLKDACNEALRDWSGSYETAHYMLGTAAGPHPYPTIVREFQRMIGEETKAQILEREGRLPDAVIACVGGGSNAIGMFADFINETDVGLIGVEPGGHGIETGEHGAPLKHGRVGIYFGMKAPMMQTEDGQIEESYSISAGLDFPSVGPQHAYLNSTGRADYVSITDDEALEAFKTLCLHEGIIPALESSHALAHALKMMRENPEKEQLLVVNLSGRGDKDIFTVHDILKARGEI</sequence>
<name>TRPB_ECOL6</name>
<proteinExistence type="inferred from homology"/>
<evidence type="ECO:0000250" key="1"/>
<evidence type="ECO:0000255" key="2">
    <source>
        <dbReference type="HAMAP-Rule" id="MF_00133"/>
    </source>
</evidence>
<accession>Q8FHV9</accession>
<organism>
    <name type="scientific">Escherichia coli O6:H1 (strain CFT073 / ATCC 700928 / UPEC)</name>
    <dbReference type="NCBI Taxonomy" id="199310"/>
    <lineage>
        <taxon>Bacteria</taxon>
        <taxon>Pseudomonadati</taxon>
        <taxon>Pseudomonadota</taxon>
        <taxon>Gammaproteobacteria</taxon>
        <taxon>Enterobacterales</taxon>
        <taxon>Enterobacteriaceae</taxon>
        <taxon>Escherichia</taxon>
    </lineage>
</organism>
<feature type="initiator methionine" description="Removed" evidence="1">
    <location>
        <position position="1"/>
    </location>
</feature>
<feature type="chain" id="PRO_0000098950" description="Tryptophan synthase beta chain">
    <location>
        <begin position="2"/>
        <end position="397"/>
    </location>
</feature>
<feature type="modified residue" description="N6-(pyridoxal phosphate)lysine" evidence="2">
    <location>
        <position position="87"/>
    </location>
</feature>
<keyword id="KW-0028">Amino-acid biosynthesis</keyword>
<keyword id="KW-0057">Aromatic amino acid biosynthesis</keyword>
<keyword id="KW-0456">Lyase</keyword>
<keyword id="KW-0663">Pyridoxal phosphate</keyword>
<keyword id="KW-1185">Reference proteome</keyword>
<keyword id="KW-0822">Tryptophan biosynthesis</keyword>